<evidence type="ECO:0000255" key="1">
    <source>
        <dbReference type="HAMAP-Rule" id="MF_00146"/>
    </source>
</evidence>
<gene>
    <name evidence="1" type="primary">dcd</name>
    <name type="ordered locus">Maeo_1411</name>
</gene>
<protein>
    <recommendedName>
        <fullName evidence="1">dCTP deaminase, dUMP-forming</fullName>
        <ecNumber evidence="1">3.5.4.30</ecNumber>
    </recommendedName>
    <alternativeName>
        <fullName evidence="1">Bifunctional dCTP deaminase:dUTPase</fullName>
    </alternativeName>
    <alternativeName>
        <fullName evidence="1">DCD-DUT</fullName>
    </alternativeName>
</protein>
<sequence>MMLSDNDIIKEIDSGGLVIEPFNKEFVGPCSYDITLGDEFIVYTDEVYDLKKELNHNKFKIENSIMVCPLCYELDDEKIEYFKNKYGVDVVVKGGLLGTTTEFVELPNDICAQYQGRSSFGRVFLQSHQTAGWIDAGFKGKITLEIVAYDKPVILYKNQRIGQLIFSKTLTPANIGYCDRKGSKYGGQNSVNASLIHKDEI</sequence>
<accession>A6UWW5</accession>
<dbReference type="EC" id="3.5.4.30" evidence="1"/>
<dbReference type="EMBL" id="CP000743">
    <property type="protein sequence ID" value="ABR56987.1"/>
    <property type="molecule type" value="Genomic_DNA"/>
</dbReference>
<dbReference type="RefSeq" id="WP_011974119.1">
    <property type="nucleotide sequence ID" value="NC_009635.1"/>
</dbReference>
<dbReference type="SMR" id="A6UWW5"/>
<dbReference type="STRING" id="419665.Maeo_1411"/>
<dbReference type="GeneID" id="5326890"/>
<dbReference type="GeneID" id="75304891"/>
<dbReference type="KEGG" id="mae:Maeo_1411"/>
<dbReference type="eggNOG" id="arCOG04048">
    <property type="taxonomic scope" value="Archaea"/>
</dbReference>
<dbReference type="HOGENOM" id="CLU_087476_2_1_2"/>
<dbReference type="OrthoDB" id="33242at2157"/>
<dbReference type="UniPathway" id="UPA00610">
    <property type="reaction ID" value="UER00667"/>
</dbReference>
<dbReference type="Proteomes" id="UP000001106">
    <property type="component" value="Chromosome"/>
</dbReference>
<dbReference type="GO" id="GO:0033973">
    <property type="term" value="F:dCTP deaminase (dUMP-forming) activity"/>
    <property type="evidence" value="ECO:0007669"/>
    <property type="project" value="UniProtKB-UniRule"/>
</dbReference>
<dbReference type="GO" id="GO:0008829">
    <property type="term" value="F:dCTP deaminase activity"/>
    <property type="evidence" value="ECO:0007669"/>
    <property type="project" value="InterPro"/>
</dbReference>
<dbReference type="GO" id="GO:0000166">
    <property type="term" value="F:nucleotide binding"/>
    <property type="evidence" value="ECO:0007669"/>
    <property type="project" value="UniProtKB-KW"/>
</dbReference>
<dbReference type="GO" id="GO:0006226">
    <property type="term" value="P:dUMP biosynthetic process"/>
    <property type="evidence" value="ECO:0007669"/>
    <property type="project" value="UniProtKB-UniRule"/>
</dbReference>
<dbReference type="GO" id="GO:0006229">
    <property type="term" value="P:dUTP biosynthetic process"/>
    <property type="evidence" value="ECO:0007669"/>
    <property type="project" value="InterPro"/>
</dbReference>
<dbReference type="CDD" id="cd07557">
    <property type="entry name" value="trimeric_dUTPase"/>
    <property type="match status" value="1"/>
</dbReference>
<dbReference type="Gene3D" id="2.70.40.10">
    <property type="match status" value="1"/>
</dbReference>
<dbReference type="HAMAP" id="MF_00146">
    <property type="entry name" value="dCTP_deaminase"/>
    <property type="match status" value="1"/>
</dbReference>
<dbReference type="InterPro" id="IPR011962">
    <property type="entry name" value="dCTP_deaminase"/>
</dbReference>
<dbReference type="InterPro" id="IPR036157">
    <property type="entry name" value="dUTPase-like_sf"/>
</dbReference>
<dbReference type="InterPro" id="IPR033704">
    <property type="entry name" value="dUTPase_trimeric"/>
</dbReference>
<dbReference type="NCBIfam" id="TIGR02274">
    <property type="entry name" value="dCTP_deam"/>
    <property type="match status" value="1"/>
</dbReference>
<dbReference type="PANTHER" id="PTHR42680">
    <property type="entry name" value="DCTP DEAMINASE"/>
    <property type="match status" value="1"/>
</dbReference>
<dbReference type="PANTHER" id="PTHR42680:SF3">
    <property type="entry name" value="DCTP DEAMINASE"/>
    <property type="match status" value="1"/>
</dbReference>
<dbReference type="Pfam" id="PF22769">
    <property type="entry name" value="DCD"/>
    <property type="match status" value="1"/>
</dbReference>
<dbReference type="SUPFAM" id="SSF51283">
    <property type="entry name" value="dUTPase-like"/>
    <property type="match status" value="1"/>
</dbReference>
<proteinExistence type="inferred from homology"/>
<keyword id="KW-0378">Hydrolase</keyword>
<keyword id="KW-0546">Nucleotide metabolism</keyword>
<keyword id="KW-0547">Nucleotide-binding</keyword>
<feature type="chain" id="PRO_1000117980" description="dCTP deaminase, dUMP-forming">
    <location>
        <begin position="1"/>
        <end position="201"/>
    </location>
</feature>
<feature type="active site" description="Proton donor/acceptor" evidence="1">
    <location>
        <position position="145"/>
    </location>
</feature>
<feature type="binding site" evidence="1">
    <location>
        <begin position="117"/>
        <end position="122"/>
    </location>
    <ligand>
        <name>dCTP</name>
        <dbReference type="ChEBI" id="CHEBI:61481"/>
    </ligand>
</feature>
<feature type="binding site" evidence="1">
    <location>
        <position position="135"/>
    </location>
    <ligand>
        <name>dCTP</name>
        <dbReference type="ChEBI" id="CHEBI:61481"/>
    </ligand>
</feature>
<feature type="binding site" evidence="1">
    <location>
        <begin position="143"/>
        <end position="145"/>
    </location>
    <ligand>
        <name>dCTP</name>
        <dbReference type="ChEBI" id="CHEBI:61481"/>
    </ligand>
</feature>
<feature type="binding site" evidence="1">
    <location>
        <position position="163"/>
    </location>
    <ligand>
        <name>dCTP</name>
        <dbReference type="ChEBI" id="CHEBI:61481"/>
    </ligand>
</feature>
<feature type="binding site" evidence="1">
    <location>
        <position position="177"/>
    </location>
    <ligand>
        <name>dCTP</name>
        <dbReference type="ChEBI" id="CHEBI:61481"/>
    </ligand>
</feature>
<feature type="binding site" evidence="1">
    <location>
        <position position="188"/>
    </location>
    <ligand>
        <name>dCTP</name>
        <dbReference type="ChEBI" id="CHEBI:61481"/>
    </ligand>
</feature>
<feature type="site" description="Important for bifunctional activity" evidence="1">
    <location>
        <begin position="132"/>
        <end position="133"/>
    </location>
</feature>
<reference key="1">
    <citation type="submission" date="2007-06" db="EMBL/GenBank/DDBJ databases">
        <title>Complete sequence of Methanococcus aeolicus Nankai-3.</title>
        <authorList>
            <consortium name="US DOE Joint Genome Institute"/>
            <person name="Copeland A."/>
            <person name="Lucas S."/>
            <person name="Lapidus A."/>
            <person name="Barry K."/>
            <person name="Glavina del Rio T."/>
            <person name="Dalin E."/>
            <person name="Tice H."/>
            <person name="Pitluck S."/>
            <person name="Chain P."/>
            <person name="Malfatti S."/>
            <person name="Shin M."/>
            <person name="Vergez L."/>
            <person name="Schmutz J."/>
            <person name="Larimer F."/>
            <person name="Land M."/>
            <person name="Hauser L."/>
            <person name="Kyrpides N."/>
            <person name="Lykidis A."/>
            <person name="Sieprawska-Lupa M."/>
            <person name="Whitman W.B."/>
            <person name="Richardson P."/>
        </authorList>
    </citation>
    <scope>NUCLEOTIDE SEQUENCE [LARGE SCALE GENOMIC DNA]</scope>
    <source>
        <strain>ATCC BAA-1280 / DSM 17508 / OCM 812 / Nankai-3</strain>
    </source>
</reference>
<organism>
    <name type="scientific">Methanococcus aeolicus (strain ATCC BAA-1280 / DSM 17508 / OCM 812 / Nankai-3)</name>
    <dbReference type="NCBI Taxonomy" id="419665"/>
    <lineage>
        <taxon>Archaea</taxon>
        <taxon>Methanobacteriati</taxon>
        <taxon>Methanobacteriota</taxon>
        <taxon>Methanomada group</taxon>
        <taxon>Methanococci</taxon>
        <taxon>Methanococcales</taxon>
        <taxon>Methanococcaceae</taxon>
        <taxon>Methanococcus</taxon>
    </lineage>
</organism>
<name>DCDB_META3</name>
<comment type="function">
    <text evidence="1">Bifunctional enzyme that catalyzes both the deamination of dCTP to dUTP and the hydrolysis of dUTP to dUMP without releasing the toxic dUTP intermediate.</text>
</comment>
<comment type="catalytic activity">
    <reaction evidence="1">
        <text>dCTP + 2 H2O = dUMP + NH4(+) + diphosphate</text>
        <dbReference type="Rhea" id="RHEA:19205"/>
        <dbReference type="ChEBI" id="CHEBI:15377"/>
        <dbReference type="ChEBI" id="CHEBI:28938"/>
        <dbReference type="ChEBI" id="CHEBI:33019"/>
        <dbReference type="ChEBI" id="CHEBI:61481"/>
        <dbReference type="ChEBI" id="CHEBI:246422"/>
        <dbReference type="EC" id="3.5.4.30"/>
    </reaction>
</comment>
<comment type="pathway">
    <text evidence="1">Pyrimidine metabolism; dUMP biosynthesis; dUMP from dCTP: step 1/1.</text>
</comment>
<comment type="subunit">
    <text evidence="1">Homotrimer.</text>
</comment>
<comment type="similarity">
    <text evidence="1">Belongs to the dCTP deaminase family.</text>
</comment>